<name>NNRE_ROSLO</name>
<protein>
    <recommendedName>
        <fullName evidence="1">NAD(P)H-hydrate epimerase</fullName>
        <ecNumber evidence="1">5.1.99.6</ecNumber>
    </recommendedName>
    <alternativeName>
        <fullName evidence="1">NAD(P)HX epimerase</fullName>
    </alternativeName>
</protein>
<keyword id="KW-0413">Isomerase</keyword>
<keyword id="KW-0479">Metal-binding</keyword>
<keyword id="KW-0520">NAD</keyword>
<keyword id="KW-0521">NADP</keyword>
<keyword id="KW-0547">Nucleotide-binding</keyword>
<keyword id="KW-0630">Potassium</keyword>
<evidence type="ECO:0000255" key="1">
    <source>
        <dbReference type="HAMAP-Rule" id="MF_01966"/>
    </source>
</evidence>
<accession>F7ZKE9</accession>
<comment type="function">
    <text evidence="1">Catalyzes the epimerization of the S- and R-forms of NAD(P)HX, a damaged form of NAD(P)H that is a result of enzymatic or heat-dependent hydration. This is a prerequisite for the S-specific NAD(P)H-hydrate dehydratase to allow the repair of both epimers of NAD(P)HX.</text>
</comment>
<comment type="catalytic activity">
    <reaction evidence="1">
        <text>(6R)-NADHX = (6S)-NADHX</text>
        <dbReference type="Rhea" id="RHEA:32215"/>
        <dbReference type="ChEBI" id="CHEBI:64074"/>
        <dbReference type="ChEBI" id="CHEBI:64075"/>
        <dbReference type="EC" id="5.1.99.6"/>
    </reaction>
</comment>
<comment type="catalytic activity">
    <reaction evidence="1">
        <text>(6R)-NADPHX = (6S)-NADPHX</text>
        <dbReference type="Rhea" id="RHEA:32227"/>
        <dbReference type="ChEBI" id="CHEBI:64076"/>
        <dbReference type="ChEBI" id="CHEBI:64077"/>
        <dbReference type="EC" id="5.1.99.6"/>
    </reaction>
</comment>
<comment type="cofactor">
    <cofactor evidence="1">
        <name>K(+)</name>
        <dbReference type="ChEBI" id="CHEBI:29103"/>
    </cofactor>
    <text evidence="1">Binds 1 potassium ion per subunit.</text>
</comment>
<comment type="similarity">
    <text evidence="1">Belongs to the NnrE/AIBP family.</text>
</comment>
<gene>
    <name evidence="1" type="primary">nnrE</name>
    <name type="ordered locus">RLO149_c019840</name>
</gene>
<proteinExistence type="inferred from homology"/>
<sequence length="227" mass="24457">MPDILTASQMRALETAAFNSGAVTGLELMERAGQSVIDALFSSKAELATGEHRAVILCGPGNNGGDGFVIARLLFVLGWQVRVYLYADPEKMPRDAHANHDSWVDLVPECTQRISFPSVLPAEAERFGDEAFGNGEVDVIVDALFGIGLNRPLSGLHPILATCHANRHEAYFVAVDVPSGLGENGPLEAADWSVFPADLTVTFHRPKQAHQNGLSFCGKIMVQYIGL</sequence>
<dbReference type="EC" id="5.1.99.6" evidence="1"/>
<dbReference type="EMBL" id="CP002623">
    <property type="protein sequence ID" value="AEI93968.1"/>
    <property type="molecule type" value="Genomic_DNA"/>
</dbReference>
<dbReference type="RefSeq" id="WP_013961896.1">
    <property type="nucleotide sequence ID" value="NC_015730.1"/>
</dbReference>
<dbReference type="SMR" id="F7ZKE9"/>
<dbReference type="STRING" id="391595.RLO149_c019840"/>
<dbReference type="KEGG" id="rli:RLO149_c019840"/>
<dbReference type="eggNOG" id="COG0062">
    <property type="taxonomic scope" value="Bacteria"/>
</dbReference>
<dbReference type="HOGENOM" id="CLU_024853_0_1_5"/>
<dbReference type="OrthoDB" id="9806925at2"/>
<dbReference type="Proteomes" id="UP000001353">
    <property type="component" value="Chromosome"/>
</dbReference>
<dbReference type="GO" id="GO:0046872">
    <property type="term" value="F:metal ion binding"/>
    <property type="evidence" value="ECO:0007669"/>
    <property type="project" value="UniProtKB-KW"/>
</dbReference>
<dbReference type="GO" id="GO:0052856">
    <property type="term" value="F:NAD(P)HX epimerase activity"/>
    <property type="evidence" value="ECO:0007669"/>
    <property type="project" value="UniProtKB-UniRule"/>
</dbReference>
<dbReference type="GO" id="GO:0000166">
    <property type="term" value="F:nucleotide binding"/>
    <property type="evidence" value="ECO:0007669"/>
    <property type="project" value="UniProtKB-KW"/>
</dbReference>
<dbReference type="Gene3D" id="3.40.50.10260">
    <property type="entry name" value="YjeF N-terminal domain"/>
    <property type="match status" value="1"/>
</dbReference>
<dbReference type="HAMAP" id="MF_01966">
    <property type="entry name" value="NADHX_epimerase"/>
    <property type="match status" value="1"/>
</dbReference>
<dbReference type="InterPro" id="IPR004443">
    <property type="entry name" value="YjeF_N_dom"/>
</dbReference>
<dbReference type="InterPro" id="IPR036652">
    <property type="entry name" value="YjeF_N_dom_sf"/>
</dbReference>
<dbReference type="InterPro" id="IPR032976">
    <property type="entry name" value="YJEFN_prot_NAXE-like"/>
</dbReference>
<dbReference type="NCBIfam" id="TIGR00197">
    <property type="entry name" value="yjeF_nterm"/>
    <property type="match status" value="1"/>
</dbReference>
<dbReference type="PANTHER" id="PTHR13232">
    <property type="entry name" value="NAD(P)H-HYDRATE EPIMERASE"/>
    <property type="match status" value="1"/>
</dbReference>
<dbReference type="PANTHER" id="PTHR13232:SF10">
    <property type="entry name" value="NAD(P)H-HYDRATE EPIMERASE"/>
    <property type="match status" value="1"/>
</dbReference>
<dbReference type="Pfam" id="PF03853">
    <property type="entry name" value="YjeF_N"/>
    <property type="match status" value="1"/>
</dbReference>
<dbReference type="SUPFAM" id="SSF64153">
    <property type="entry name" value="YjeF N-terminal domain-like"/>
    <property type="match status" value="1"/>
</dbReference>
<dbReference type="PROSITE" id="PS51385">
    <property type="entry name" value="YJEF_N"/>
    <property type="match status" value="1"/>
</dbReference>
<reference key="1">
    <citation type="journal article" date="2011" name="BMC Genomics">
        <title>Comparative genome analysis and genome-guided physiological analysis of Roseobacter litoralis.</title>
        <authorList>
            <person name="Kalhoefer D."/>
            <person name="Thole S."/>
            <person name="Voget S."/>
            <person name="Lehmann R."/>
            <person name="Liesegang H."/>
            <person name="Wollher A."/>
            <person name="Daniel R."/>
            <person name="Simon M."/>
            <person name="Brinkhoff T."/>
        </authorList>
    </citation>
    <scope>NUCLEOTIDE SEQUENCE [LARGE SCALE GENOMIC DNA]</scope>
    <source>
        <strain>ATCC 49566 / DSM 6996 / JCM 21268 / NBRC 15278 / OCh 149</strain>
    </source>
</reference>
<organism>
    <name type="scientific">Roseobacter litoralis (strain ATCC 49566 / DSM 6996 / JCM 21268 / NBRC 15278 / OCh 149)</name>
    <dbReference type="NCBI Taxonomy" id="391595"/>
    <lineage>
        <taxon>Bacteria</taxon>
        <taxon>Pseudomonadati</taxon>
        <taxon>Pseudomonadota</taxon>
        <taxon>Alphaproteobacteria</taxon>
        <taxon>Rhodobacterales</taxon>
        <taxon>Roseobacteraceae</taxon>
        <taxon>Roseobacter</taxon>
    </lineage>
</organism>
<feature type="chain" id="PRO_0000416378" description="NAD(P)H-hydrate epimerase">
    <location>
        <begin position="1"/>
        <end position="227"/>
    </location>
</feature>
<feature type="domain" description="YjeF N-terminal" evidence="1">
    <location>
        <begin position="10"/>
        <end position="227"/>
    </location>
</feature>
<feature type="binding site" evidence="1">
    <location>
        <begin position="62"/>
        <end position="66"/>
    </location>
    <ligand>
        <name>(6S)-NADPHX</name>
        <dbReference type="ChEBI" id="CHEBI:64076"/>
    </ligand>
</feature>
<feature type="binding site" evidence="1">
    <location>
        <position position="63"/>
    </location>
    <ligand>
        <name>K(+)</name>
        <dbReference type="ChEBI" id="CHEBI:29103"/>
    </ligand>
</feature>
<feature type="binding site" evidence="1">
    <location>
        <position position="142"/>
    </location>
    <ligand>
        <name>K(+)</name>
        <dbReference type="ChEBI" id="CHEBI:29103"/>
    </ligand>
</feature>
<feature type="binding site" evidence="1">
    <location>
        <begin position="146"/>
        <end position="152"/>
    </location>
    <ligand>
        <name>(6S)-NADPHX</name>
        <dbReference type="ChEBI" id="CHEBI:64076"/>
    </ligand>
</feature>
<feature type="binding site" evidence="1">
    <location>
        <position position="176"/>
    </location>
    <ligand>
        <name>(6S)-NADPHX</name>
        <dbReference type="ChEBI" id="CHEBI:64076"/>
    </ligand>
</feature>
<feature type="binding site" evidence="1">
    <location>
        <position position="179"/>
    </location>
    <ligand>
        <name>K(+)</name>
        <dbReference type="ChEBI" id="CHEBI:29103"/>
    </ligand>
</feature>